<keyword id="KW-0183">Conidiation</keyword>
<keyword id="KW-1015">Disulfide bond</keyword>
<keyword id="KW-0551">Lipid droplet</keyword>
<keyword id="KW-0964">Secreted</keyword>
<keyword id="KW-0732">Signal</keyword>
<keyword id="KW-0749">Sporulation</keyword>
<keyword id="KW-0843">Virulence</keyword>
<comment type="function">
    <text evidence="3 5">Aerial growth, conidiation, and dispersal of filamentous fungi in the environment rely upon a capability of their secreting small amphipathic proteins called hydrophobins (HPBs) with low sequence identity. Class I can self-assemble into an outermost layer of rodlet bundles on aerial cell surfaces, conferring cellular hydrophobicity that supports fungal growth, development and dispersal; whereas Class II form highly ordered films at water-air interfaces through intermolecular interactions but contribute nothing to the rodlet structure (Probable). Hydr1 is a class I hydrophobin involved in spore germination, appressorium formation, but not in the formation of the rodlet layer of conidia (PubMed:36135702). Responsible for the full virulence on rubber tree leaves (PubMed:36135702).</text>
</comment>
<comment type="subunit">
    <text evidence="3">Interacts with the lipid droplet coating protein Cap20.</text>
</comment>
<comment type="subcellular location">
    <subcellularLocation>
        <location evidence="3">Secreted</location>
    </subcellularLocation>
    <subcellularLocation>
        <location evidence="3">Lipid droplet</location>
    </subcellularLocation>
    <text evidence="3">Mainly localizes to intracellular lipid droplets in a Cap20-dependent manner.</text>
</comment>
<comment type="disruption phenotype">
    <text evidence="3">Leads to slightly enhanced mycelial growth, small conidia, slow spore germination and appressoria formation, cell wall integrity and virulence (PubMed:36135702). Reduces the cellular lipids content in both mycelia and conidia (PubMed:36135702).</text>
</comment>
<comment type="similarity">
    <text evidence="5">Belongs to the fungal hydrophobin family.</text>
</comment>
<protein>
    <recommendedName>
        <fullName evidence="4">Class I hydrophobin 1</fullName>
    </recommendedName>
</protein>
<dbReference type="EMBL" id="MN166623">
    <property type="protein sequence ID" value="QIG38049.1"/>
    <property type="molecule type" value="Genomic_DNA"/>
</dbReference>
<dbReference type="EMBL" id="QPMT01000011">
    <property type="protein sequence ID" value="KAF4861282.1"/>
    <property type="molecule type" value="Genomic_DNA"/>
</dbReference>
<dbReference type="OrthoDB" id="4225815at2759"/>
<dbReference type="Proteomes" id="UP000711996">
    <property type="component" value="Unassembled WGS sequence"/>
</dbReference>
<dbReference type="GO" id="GO:0005576">
    <property type="term" value="C:extracellular region"/>
    <property type="evidence" value="ECO:0007669"/>
    <property type="project" value="UniProtKB-KW"/>
</dbReference>
<dbReference type="GO" id="GO:0009277">
    <property type="term" value="C:fungal-type cell wall"/>
    <property type="evidence" value="ECO:0007669"/>
    <property type="project" value="InterPro"/>
</dbReference>
<dbReference type="GO" id="GO:0005199">
    <property type="term" value="F:structural constituent of cell wall"/>
    <property type="evidence" value="ECO:0007669"/>
    <property type="project" value="InterPro"/>
</dbReference>
<dbReference type="InterPro" id="IPR001338">
    <property type="entry name" value="Hydrophobin"/>
</dbReference>
<dbReference type="InterPro" id="IPR019778">
    <property type="entry name" value="Hydrophobin_CS"/>
</dbReference>
<dbReference type="Pfam" id="PF01185">
    <property type="entry name" value="Hydrophobin"/>
    <property type="match status" value="1"/>
</dbReference>
<dbReference type="SMART" id="SM00075">
    <property type="entry name" value="HYDRO"/>
    <property type="match status" value="1"/>
</dbReference>
<dbReference type="PROSITE" id="PS00956">
    <property type="entry name" value="HYDROPHOBIN"/>
    <property type="match status" value="1"/>
</dbReference>
<feature type="signal peptide" evidence="2">
    <location>
        <begin position="1"/>
        <end position="19"/>
    </location>
</feature>
<feature type="chain" id="PRO_5026371463" description="Class I hydrophobin 1">
    <location>
        <begin position="20"/>
        <end position="138"/>
    </location>
</feature>
<feature type="disulfide bond" evidence="1">
    <location>
        <begin position="45"/>
        <end position="113"/>
    </location>
</feature>
<feature type="disulfide bond" evidence="1">
    <location>
        <begin position="53"/>
        <end position="107"/>
    </location>
</feature>
<feature type="disulfide bond" evidence="1">
    <location>
        <begin position="54"/>
        <end position="91"/>
    </location>
</feature>
<feature type="disulfide bond" evidence="1">
    <location>
        <begin position="114"/>
        <end position="131"/>
    </location>
</feature>
<feature type="sequence conflict" description="In Ref. 1; QIG38049." evidence="5" ref="1">
    <original>S</original>
    <variation>A</variation>
    <location>
        <position position="69"/>
    </location>
</feature>
<proteinExistence type="evidence at protein level"/>
<name>HYDR1_COLSI</name>
<gene>
    <name evidence="4" type="primary">Hydr1</name>
    <name type="ORF">CGCSCA2_v004797</name>
</gene>
<sequence>MRFSAATVSALAMALTVAAAPGNTAKEALAKRTDDLTVADAQNICGKDLSVNCCNQVDASTNNNDNSGSGILSGILGGVLGNGGLKLTDGCSSIGVGIANDLLNSQCKQSVACCKTDGNTASGLVAVQLPCIPISGLL</sequence>
<evidence type="ECO:0000250" key="1">
    <source>
        <dbReference type="UniProtKB" id="Q04571"/>
    </source>
</evidence>
<evidence type="ECO:0000255" key="2"/>
<evidence type="ECO:0000269" key="3">
    <source>
    </source>
</evidence>
<evidence type="ECO:0000303" key="4">
    <source>
    </source>
</evidence>
<evidence type="ECO:0000305" key="5"/>
<reference key="1">
    <citation type="journal article" date="2022" name="J. Fungi">
        <title>The Colletotrichum siamense Hydrophobin CsHydr1 Interacts with the Lipid Droplet-Coating Protein CsCap20 and Regulates Lipid Metabolism and Virulence.</title>
        <authorList>
            <person name="Wang N."/>
            <person name="Wang J."/>
            <person name="Lu J."/>
            <person name="Liu Y."/>
            <person name="Xi Y."/>
            <person name="Song M."/>
            <person name="Guan X."/>
            <person name="Li Z."/>
            <person name="Li X."/>
            <person name="Zhang Y."/>
            <person name="Lin C."/>
            <person name="Miao W."/>
        </authorList>
    </citation>
    <scope>NUCLEOTIDE SEQUENCE [GENOMIC DNA]</scope>
    <scope>FUNCTION</scope>
    <scope>DISRUPTION PHENOTYPE</scope>
    <scope>SUBCELLULAR LOCATION</scope>
    <scope>INTERACTION WITH CAP20</scope>
    <source>
        <strain>HN08</strain>
    </source>
</reference>
<reference key="2">
    <citation type="journal article" date="2021" name="Environ. Microbiol.">
        <title>Telomeres and a repeat-rich chromosome encode effector gene clusters in plant pathogenic Colletotrichum fungi.</title>
        <authorList>
            <person name="Gan P."/>
            <person name="Hiroyama R."/>
            <person name="Tsushima A."/>
            <person name="Masuda S."/>
            <person name="Shibata A."/>
            <person name="Ueno A."/>
            <person name="Kumakura N."/>
            <person name="Narusaka M."/>
            <person name="Hoat T.X."/>
            <person name="Narusaka Y."/>
            <person name="Takano Y."/>
            <person name="Shirasu K."/>
        </authorList>
    </citation>
    <scope>NUCLEOTIDE SEQUENCE [LARGE SCALE GENOMIC DNA]</scope>
    <source>
        <strain>CAD2</strain>
    </source>
</reference>
<organism>
    <name type="scientific">Colletotrichum siamense</name>
    <name type="common">Anthracnose fungus</name>
    <dbReference type="NCBI Taxonomy" id="690259"/>
    <lineage>
        <taxon>Eukaryota</taxon>
        <taxon>Fungi</taxon>
        <taxon>Dikarya</taxon>
        <taxon>Ascomycota</taxon>
        <taxon>Pezizomycotina</taxon>
        <taxon>Sordariomycetes</taxon>
        <taxon>Hypocreomycetidae</taxon>
        <taxon>Glomerellales</taxon>
        <taxon>Glomerellaceae</taxon>
        <taxon>Colletotrichum</taxon>
        <taxon>Colletotrichum gloeosporioides species complex</taxon>
    </lineage>
</organism>
<accession>A0A6G6VYL3</accession>
<accession>A0A9P5EWX1</accession>